<accession>Q54KL9</accession>
<sequence length="70" mass="7704">MELLNKSISVVKNVVCNFLFEKIKIDENINIDGIDSGPGMSKRLTTSTNINVVLVLIIALIIFILMLDGV</sequence>
<gene>
    <name type="ORF">DDB_G0287263</name>
</gene>
<comment type="subcellular location">
    <subcellularLocation>
        <location evidence="2">Membrane</location>
        <topology evidence="2">Single-pass membrane protein</topology>
    </subcellularLocation>
</comment>
<organism>
    <name type="scientific">Dictyostelium discoideum</name>
    <name type="common">Social amoeba</name>
    <dbReference type="NCBI Taxonomy" id="44689"/>
    <lineage>
        <taxon>Eukaryota</taxon>
        <taxon>Amoebozoa</taxon>
        <taxon>Evosea</taxon>
        <taxon>Eumycetozoa</taxon>
        <taxon>Dictyostelia</taxon>
        <taxon>Dictyosteliales</taxon>
        <taxon>Dictyosteliaceae</taxon>
        <taxon>Dictyostelium</taxon>
    </lineage>
</organism>
<dbReference type="EMBL" id="AAFI02000099">
    <property type="protein sequence ID" value="EAL63833.1"/>
    <property type="molecule type" value="Genomic_DNA"/>
</dbReference>
<dbReference type="RefSeq" id="XP_637338.1">
    <property type="nucleotide sequence ID" value="XM_632246.1"/>
</dbReference>
<dbReference type="SMR" id="Q54KL9"/>
<dbReference type="PaxDb" id="44689-DDB0219209"/>
<dbReference type="EnsemblProtists" id="EAL63833">
    <property type="protein sequence ID" value="EAL63833"/>
    <property type="gene ID" value="DDB_G0287263"/>
</dbReference>
<dbReference type="GeneID" id="8626036"/>
<dbReference type="KEGG" id="ddi:DDB_G0287263"/>
<dbReference type="dictyBase" id="DDB_G0287263"/>
<dbReference type="VEuPathDB" id="AmoebaDB:DDB_G0287263"/>
<dbReference type="HOGENOM" id="CLU_2763182_0_0_1"/>
<dbReference type="InParanoid" id="Q54KL9"/>
<dbReference type="PRO" id="PR:Q54KL9"/>
<dbReference type="Proteomes" id="UP000002195">
    <property type="component" value="Chromosome 5"/>
</dbReference>
<dbReference type="GO" id="GO:0016020">
    <property type="term" value="C:membrane"/>
    <property type="evidence" value="ECO:0007669"/>
    <property type="project" value="UniProtKB-SubCell"/>
</dbReference>
<feature type="chain" id="PRO_0000347035" description="Putative uncharacterized protein DDB_G0287263">
    <location>
        <begin position="1"/>
        <end position="70"/>
    </location>
</feature>
<feature type="transmembrane region" description="Helical" evidence="1">
    <location>
        <begin position="50"/>
        <end position="70"/>
    </location>
</feature>
<proteinExistence type="predicted"/>
<name>Y9209_DICDI</name>
<reference key="1">
    <citation type="journal article" date="2005" name="Nature">
        <title>The genome of the social amoeba Dictyostelium discoideum.</title>
        <authorList>
            <person name="Eichinger L."/>
            <person name="Pachebat J.A."/>
            <person name="Gloeckner G."/>
            <person name="Rajandream M.A."/>
            <person name="Sucgang R."/>
            <person name="Berriman M."/>
            <person name="Song J."/>
            <person name="Olsen R."/>
            <person name="Szafranski K."/>
            <person name="Xu Q."/>
            <person name="Tunggal B."/>
            <person name="Kummerfeld S."/>
            <person name="Madera M."/>
            <person name="Konfortov B.A."/>
            <person name="Rivero F."/>
            <person name="Bankier A.T."/>
            <person name="Lehmann R."/>
            <person name="Hamlin N."/>
            <person name="Davies R."/>
            <person name="Gaudet P."/>
            <person name="Fey P."/>
            <person name="Pilcher K."/>
            <person name="Chen G."/>
            <person name="Saunders D."/>
            <person name="Sodergren E.J."/>
            <person name="Davis P."/>
            <person name="Kerhornou A."/>
            <person name="Nie X."/>
            <person name="Hall N."/>
            <person name="Anjard C."/>
            <person name="Hemphill L."/>
            <person name="Bason N."/>
            <person name="Farbrother P."/>
            <person name="Desany B."/>
            <person name="Just E."/>
            <person name="Morio T."/>
            <person name="Rost R."/>
            <person name="Churcher C.M."/>
            <person name="Cooper J."/>
            <person name="Haydock S."/>
            <person name="van Driessche N."/>
            <person name="Cronin A."/>
            <person name="Goodhead I."/>
            <person name="Muzny D.M."/>
            <person name="Mourier T."/>
            <person name="Pain A."/>
            <person name="Lu M."/>
            <person name="Harper D."/>
            <person name="Lindsay R."/>
            <person name="Hauser H."/>
            <person name="James K.D."/>
            <person name="Quiles M."/>
            <person name="Madan Babu M."/>
            <person name="Saito T."/>
            <person name="Buchrieser C."/>
            <person name="Wardroper A."/>
            <person name="Felder M."/>
            <person name="Thangavelu M."/>
            <person name="Johnson D."/>
            <person name="Knights A."/>
            <person name="Loulseged H."/>
            <person name="Mungall K.L."/>
            <person name="Oliver K."/>
            <person name="Price C."/>
            <person name="Quail M.A."/>
            <person name="Urushihara H."/>
            <person name="Hernandez J."/>
            <person name="Rabbinowitsch E."/>
            <person name="Steffen D."/>
            <person name="Sanders M."/>
            <person name="Ma J."/>
            <person name="Kohara Y."/>
            <person name="Sharp S."/>
            <person name="Simmonds M.N."/>
            <person name="Spiegler S."/>
            <person name="Tivey A."/>
            <person name="Sugano S."/>
            <person name="White B."/>
            <person name="Walker D."/>
            <person name="Woodward J.R."/>
            <person name="Winckler T."/>
            <person name="Tanaka Y."/>
            <person name="Shaulsky G."/>
            <person name="Schleicher M."/>
            <person name="Weinstock G.M."/>
            <person name="Rosenthal A."/>
            <person name="Cox E.C."/>
            <person name="Chisholm R.L."/>
            <person name="Gibbs R.A."/>
            <person name="Loomis W.F."/>
            <person name="Platzer M."/>
            <person name="Kay R.R."/>
            <person name="Williams J.G."/>
            <person name="Dear P.H."/>
            <person name="Noegel A.A."/>
            <person name="Barrell B.G."/>
            <person name="Kuspa A."/>
        </authorList>
    </citation>
    <scope>NUCLEOTIDE SEQUENCE [LARGE SCALE GENOMIC DNA]</scope>
    <source>
        <strain>AX4</strain>
    </source>
</reference>
<protein>
    <recommendedName>
        <fullName>Putative uncharacterized protein DDB_G0287263</fullName>
    </recommendedName>
</protein>
<keyword id="KW-0472">Membrane</keyword>
<keyword id="KW-1185">Reference proteome</keyword>
<keyword id="KW-0812">Transmembrane</keyword>
<keyword id="KW-1133">Transmembrane helix</keyword>
<evidence type="ECO:0000255" key="1"/>
<evidence type="ECO:0000305" key="2"/>